<keyword id="KW-0460">Magnesium</keyword>
<keyword id="KW-0464">Manganese</keyword>
<keyword id="KW-0474">Menaquinone biosynthesis</keyword>
<keyword id="KW-0479">Metal-binding</keyword>
<keyword id="KW-0786">Thiamine pyrophosphate</keyword>
<keyword id="KW-0808">Transferase</keyword>
<proteinExistence type="inferred from homology"/>
<accession>Q3APX4</accession>
<dbReference type="EC" id="2.2.1.9" evidence="1"/>
<dbReference type="EMBL" id="CP000108">
    <property type="protein sequence ID" value="ABB28951.1"/>
    <property type="molecule type" value="Genomic_DNA"/>
</dbReference>
<dbReference type="SMR" id="Q3APX4"/>
<dbReference type="STRING" id="340177.Cag_1700"/>
<dbReference type="KEGG" id="cch:Cag_1700"/>
<dbReference type="eggNOG" id="COG1165">
    <property type="taxonomic scope" value="Bacteria"/>
</dbReference>
<dbReference type="HOGENOM" id="CLU_006051_3_0_10"/>
<dbReference type="OrthoDB" id="9791859at2"/>
<dbReference type="UniPathway" id="UPA00079"/>
<dbReference type="UniPathway" id="UPA01057">
    <property type="reaction ID" value="UER00164"/>
</dbReference>
<dbReference type="GO" id="GO:0070204">
    <property type="term" value="F:2-succinyl-5-enolpyruvyl-6-hydroxy-3-cyclohexene-1-carboxylic-acid synthase activity"/>
    <property type="evidence" value="ECO:0007669"/>
    <property type="project" value="UniProtKB-UniRule"/>
</dbReference>
<dbReference type="GO" id="GO:0000287">
    <property type="term" value="F:magnesium ion binding"/>
    <property type="evidence" value="ECO:0007669"/>
    <property type="project" value="UniProtKB-UniRule"/>
</dbReference>
<dbReference type="GO" id="GO:0030145">
    <property type="term" value="F:manganese ion binding"/>
    <property type="evidence" value="ECO:0007669"/>
    <property type="project" value="UniProtKB-UniRule"/>
</dbReference>
<dbReference type="GO" id="GO:0030976">
    <property type="term" value="F:thiamine pyrophosphate binding"/>
    <property type="evidence" value="ECO:0007669"/>
    <property type="project" value="UniProtKB-UniRule"/>
</dbReference>
<dbReference type="GO" id="GO:0009234">
    <property type="term" value="P:menaquinone biosynthetic process"/>
    <property type="evidence" value="ECO:0007669"/>
    <property type="project" value="UniProtKB-UniRule"/>
</dbReference>
<dbReference type="CDD" id="cd07037">
    <property type="entry name" value="TPP_PYR_MenD"/>
    <property type="match status" value="1"/>
</dbReference>
<dbReference type="CDD" id="cd02009">
    <property type="entry name" value="TPP_SHCHC_synthase"/>
    <property type="match status" value="1"/>
</dbReference>
<dbReference type="Gene3D" id="3.40.50.970">
    <property type="match status" value="2"/>
</dbReference>
<dbReference type="Gene3D" id="3.40.50.1220">
    <property type="entry name" value="TPP-binding domain"/>
    <property type="match status" value="1"/>
</dbReference>
<dbReference type="HAMAP" id="MF_01659">
    <property type="entry name" value="MenD"/>
    <property type="match status" value="1"/>
</dbReference>
<dbReference type="InterPro" id="IPR029035">
    <property type="entry name" value="DHS-like_NAD/FAD-binding_dom"/>
</dbReference>
<dbReference type="InterPro" id="IPR004433">
    <property type="entry name" value="MenaQ_synth_MenD"/>
</dbReference>
<dbReference type="InterPro" id="IPR032264">
    <property type="entry name" value="MenD_middle"/>
</dbReference>
<dbReference type="InterPro" id="IPR029061">
    <property type="entry name" value="THDP-binding"/>
</dbReference>
<dbReference type="InterPro" id="IPR012001">
    <property type="entry name" value="Thiamin_PyroP_enz_TPP-bd_dom"/>
</dbReference>
<dbReference type="InterPro" id="IPR011766">
    <property type="entry name" value="TPP_enzyme_TPP-bd"/>
</dbReference>
<dbReference type="NCBIfam" id="TIGR00173">
    <property type="entry name" value="menD"/>
    <property type="match status" value="1"/>
</dbReference>
<dbReference type="PANTHER" id="PTHR42916">
    <property type="entry name" value="2-SUCCINYL-5-ENOLPYRUVYL-6-HYDROXY-3-CYCLOHEXENE-1-CARBOXYLATE SYNTHASE"/>
    <property type="match status" value="1"/>
</dbReference>
<dbReference type="PANTHER" id="PTHR42916:SF1">
    <property type="entry name" value="PROTEIN PHYLLO, CHLOROPLASTIC"/>
    <property type="match status" value="1"/>
</dbReference>
<dbReference type="Pfam" id="PF02775">
    <property type="entry name" value="TPP_enzyme_C"/>
    <property type="match status" value="1"/>
</dbReference>
<dbReference type="Pfam" id="PF16582">
    <property type="entry name" value="TPP_enzyme_M_2"/>
    <property type="match status" value="1"/>
</dbReference>
<dbReference type="Pfam" id="PF02776">
    <property type="entry name" value="TPP_enzyme_N"/>
    <property type="match status" value="1"/>
</dbReference>
<dbReference type="PIRSF" id="PIRSF004983">
    <property type="entry name" value="MenD"/>
    <property type="match status" value="1"/>
</dbReference>
<dbReference type="SUPFAM" id="SSF52467">
    <property type="entry name" value="DHS-like NAD/FAD-binding domain"/>
    <property type="match status" value="1"/>
</dbReference>
<dbReference type="SUPFAM" id="SSF52518">
    <property type="entry name" value="Thiamin diphosphate-binding fold (THDP-binding)"/>
    <property type="match status" value="2"/>
</dbReference>
<name>MEND_CHLCH</name>
<feature type="chain" id="PRO_0000341719" description="2-succinyl-5-enolpyruvyl-6-hydroxy-3-cyclohexene-1-carboxylate synthase">
    <location>
        <begin position="1"/>
        <end position="583"/>
    </location>
</feature>
<comment type="function">
    <text evidence="1">Catalyzes the thiamine diphosphate-dependent decarboxylation of 2-oxoglutarate and the subsequent addition of the resulting succinic semialdehyde-thiamine pyrophosphate anion to isochorismate to yield 2-succinyl-5-enolpyruvyl-6-hydroxy-3-cyclohexene-1-carboxylate (SEPHCHC).</text>
</comment>
<comment type="catalytic activity">
    <reaction evidence="1">
        <text>isochorismate + 2-oxoglutarate + H(+) = 5-enolpyruvoyl-6-hydroxy-2-succinyl-cyclohex-3-ene-1-carboxylate + CO2</text>
        <dbReference type="Rhea" id="RHEA:25593"/>
        <dbReference type="ChEBI" id="CHEBI:15378"/>
        <dbReference type="ChEBI" id="CHEBI:16526"/>
        <dbReference type="ChEBI" id="CHEBI:16810"/>
        <dbReference type="ChEBI" id="CHEBI:29780"/>
        <dbReference type="ChEBI" id="CHEBI:58818"/>
        <dbReference type="EC" id="2.2.1.9"/>
    </reaction>
</comment>
<comment type="cofactor">
    <cofactor evidence="1">
        <name>Mg(2+)</name>
        <dbReference type="ChEBI" id="CHEBI:18420"/>
    </cofactor>
    <cofactor evidence="1">
        <name>Mn(2+)</name>
        <dbReference type="ChEBI" id="CHEBI:29035"/>
    </cofactor>
</comment>
<comment type="cofactor">
    <cofactor evidence="1">
        <name>thiamine diphosphate</name>
        <dbReference type="ChEBI" id="CHEBI:58937"/>
    </cofactor>
    <text evidence="1">Binds 1 thiamine pyrophosphate per subunit.</text>
</comment>
<comment type="pathway">
    <text evidence="1">Quinol/quinone metabolism; 1,4-dihydroxy-2-naphthoate biosynthesis; 1,4-dihydroxy-2-naphthoate from chorismate: step 2/7.</text>
</comment>
<comment type="pathway">
    <text evidence="1">Quinol/quinone metabolism; menaquinone biosynthesis.</text>
</comment>
<comment type="subunit">
    <text evidence="1">Homodimer.</text>
</comment>
<comment type="similarity">
    <text evidence="1">Belongs to the TPP enzyme family. MenD subfamily.</text>
</comment>
<protein>
    <recommendedName>
        <fullName evidence="1">2-succinyl-5-enolpyruvyl-6-hydroxy-3-cyclohexene-1-carboxylate synthase</fullName>
        <shortName evidence="1">SEPHCHC synthase</shortName>
        <ecNumber evidence="1">2.2.1.9</ecNumber>
    </recommendedName>
    <alternativeName>
        <fullName evidence="1">Menaquinone biosynthesis protein MenD</fullName>
    </alternativeName>
</protein>
<gene>
    <name evidence="1" type="primary">menD</name>
    <name type="ordered locus">Cag_1700</name>
</gene>
<reference key="1">
    <citation type="submission" date="2005-08" db="EMBL/GenBank/DDBJ databases">
        <title>Complete sequence of Chlorobium chlorochromatii CaD3.</title>
        <authorList>
            <consortium name="US DOE Joint Genome Institute"/>
            <person name="Copeland A."/>
            <person name="Lucas S."/>
            <person name="Lapidus A."/>
            <person name="Barry K."/>
            <person name="Detter J.C."/>
            <person name="Glavina T."/>
            <person name="Hammon N."/>
            <person name="Israni S."/>
            <person name="Pitluck S."/>
            <person name="Bryant D."/>
            <person name="Schmutz J."/>
            <person name="Larimer F."/>
            <person name="Land M."/>
            <person name="Kyrpides N."/>
            <person name="Ivanova N."/>
            <person name="Richardson P."/>
        </authorList>
    </citation>
    <scope>NUCLEOTIDE SEQUENCE [LARGE SCALE GENOMIC DNA]</scope>
    <source>
        <strain>CaD3</strain>
    </source>
</reference>
<evidence type="ECO:0000255" key="1">
    <source>
        <dbReference type="HAMAP-Rule" id="MF_01659"/>
    </source>
</evidence>
<organism>
    <name type="scientific">Chlorobium chlorochromatii (strain CaD3)</name>
    <dbReference type="NCBI Taxonomy" id="340177"/>
    <lineage>
        <taxon>Bacteria</taxon>
        <taxon>Pseudomonadati</taxon>
        <taxon>Chlorobiota</taxon>
        <taxon>Chlorobiia</taxon>
        <taxon>Chlorobiales</taxon>
        <taxon>Chlorobiaceae</taxon>
        <taxon>Chlorobium/Pelodictyon group</taxon>
        <taxon>Chlorobium</taxon>
    </lineage>
</organism>
<sequence>MNNRQITTLWSTLLVEALIRQGVDFFCISPGSRSTPLTIAAARNPRARTKLFADERSAAFFALGYARATEMVAPLICTSGTAVANYFPAVVEASMDFQPMLIISADRPFELLECGANQTIRQEHIFGSYTRWSMQLPTPSVEVPLTSLLSTVEYAVAKALNTPAGVVHLNQPFREPFEPESVAANNHAWWQSAQQWLASKAAHTTTTVEKKHPNNASITLLRQHLTTAKQPLLIAGSMRCKDDAEAVAALANNLKIPLYADFSSGLRMKSNLPPLQLLMQSPAWRAAFHPDVVLHFGGNVVAKHLATALREWQPAHYMVVREEPMRFSPDHNVTHRLEASIAATAHALHNSRSTPLWRESEADHFFAQAAQELEGDVVADQPITEISAARLISRHIGTEQALFVSNSMAVRDMDMYAASLHEAGIPTAINRGASGIDGILSTAAGFACGHGKSTTLLIGDIAFLHDLNALSLLGSLTVPLQIVLLNNNGGGIFSFLPIAACDDLFETYFATPQHYSIPLAAETFGLHYANPTTNSEFVAAYHQAQQSPQSTIIEVKSSRTNNLQHHRLLNARLQAIAAKLFNG</sequence>